<protein>
    <recommendedName>
        <fullName evidence="3">Protein transport protein Sec23A</fullName>
    </recommendedName>
    <alternativeName>
        <fullName>SEC23-related protein A</fullName>
    </alternativeName>
</protein>
<sequence>MTTFLEFIQQNEDRDGVRFSWNVWPSSRLEATRMVVPVAALLTPLKERPDLPPIQYEPVLCSRTTCRAVLNPLCQVDYRAKLWACNFCYQRNQFPPTYAGISEMNQPAELLPQFSSIEYVVQRGPQMPLIFLYVVDTCMEDEDLQALKESMQMSLSLLPPTALVGLITFGRMVHVHELGCEGISKSYVFRGNKDLTGKQIQEMLSLTKSPAAQQGRGPQVQQPPPSNRFLQPVQNIDMNLTDLLGELQRDPWPVPQGKRPLRSSGAALSIAVGLLECTFPNTGARIMMFIGGPATQGPGMVVGDELKTPIRSWHDIEKDNAKYVKKATKHYEALAHRAAASGHVIDIYACALDQTGLLEMKCCPNNTGGYMVMGDSFNTSLFKQTFQRVFTKDAQSNFKMAFGGTLEIKTSRELKISGAIGPCVSLNAKGPCVSENEIGTGGTCQWKICGINPFTTLAVYFEVVNQHNAPIPQGGRGAIQFVTQYQHSSGQRRIRVTTIARNWADAQTQIQNIAASFDQEAAAILMARLAVYRAETEEGPDVLRWLDRQLIRLCQKFGEYHKDDPVSFKFSETFSLYPQFMFHLRRSPFLQVFNNSPDESSYYRHHFMRQDLTQSLIMVQPILYAYSFNGPPEPVLLDSSSILPDRILLMDTFFQILIYLGETIAQWKKAGYQDMPEYENFRHLLQAPVDDGQEILQSRFPMPRYIDTEHGGSQARFLLSKVNPSQTHNNMYGWGQESGAPILTDDVSLQVFMDHLKKLAVSSAA</sequence>
<accession>Q05AS9</accession>
<reference key="1">
    <citation type="submission" date="2006-09" db="EMBL/GenBank/DDBJ databases">
        <authorList>
            <consortium name="NIH - Xenopus Gene Collection (XGC) project"/>
        </authorList>
    </citation>
    <scope>NUCLEOTIDE SEQUENCE [LARGE SCALE MRNA]</scope>
    <source>
        <tissue>Testis</tissue>
    </source>
</reference>
<keyword id="KW-0963">Cytoplasm</keyword>
<keyword id="KW-0968">Cytoplasmic vesicle</keyword>
<keyword id="KW-0256">Endoplasmic reticulum</keyword>
<keyword id="KW-0931">ER-Golgi transport</keyword>
<keyword id="KW-0472">Membrane</keyword>
<keyword id="KW-0479">Metal-binding</keyword>
<keyword id="KW-0653">Protein transport</keyword>
<keyword id="KW-1185">Reference proteome</keyword>
<keyword id="KW-0813">Transport</keyword>
<keyword id="KW-0862">Zinc</keyword>
<name>SC23A_XENTR</name>
<feature type="chain" id="PRO_0000318935" description="Protein transport protein Sec23A">
    <location>
        <begin position="1"/>
        <end position="765"/>
    </location>
</feature>
<feature type="repeat" description="Gelsolin-like" evidence="2">
    <location>
        <begin position="632"/>
        <end position="718"/>
    </location>
</feature>
<feature type="binding site" evidence="1">
    <location>
        <position position="61"/>
    </location>
    <ligand>
        <name>Zn(2+)</name>
        <dbReference type="ChEBI" id="CHEBI:29105"/>
    </ligand>
</feature>
<feature type="binding site" evidence="1">
    <location>
        <position position="66"/>
    </location>
    <ligand>
        <name>Zn(2+)</name>
        <dbReference type="ChEBI" id="CHEBI:29105"/>
    </ligand>
</feature>
<feature type="binding site" evidence="1">
    <location>
        <position position="85"/>
    </location>
    <ligand>
        <name>Zn(2+)</name>
        <dbReference type="ChEBI" id="CHEBI:29105"/>
    </ligand>
</feature>
<feature type="binding site" evidence="1">
    <location>
        <position position="88"/>
    </location>
    <ligand>
        <name>Zn(2+)</name>
        <dbReference type="ChEBI" id="CHEBI:29105"/>
    </ligand>
</feature>
<proteinExistence type="evidence at transcript level"/>
<gene>
    <name evidence="1" type="primary">sec23a</name>
</gene>
<evidence type="ECO:0000250" key="1">
    <source>
        <dbReference type="UniProtKB" id="Q15436"/>
    </source>
</evidence>
<evidence type="ECO:0000255" key="2"/>
<evidence type="ECO:0000305" key="3"/>
<organism>
    <name type="scientific">Xenopus tropicalis</name>
    <name type="common">Western clawed frog</name>
    <name type="synonym">Silurana tropicalis</name>
    <dbReference type="NCBI Taxonomy" id="8364"/>
    <lineage>
        <taxon>Eukaryota</taxon>
        <taxon>Metazoa</taxon>
        <taxon>Chordata</taxon>
        <taxon>Craniata</taxon>
        <taxon>Vertebrata</taxon>
        <taxon>Euteleostomi</taxon>
        <taxon>Amphibia</taxon>
        <taxon>Batrachia</taxon>
        <taxon>Anura</taxon>
        <taxon>Pipoidea</taxon>
        <taxon>Pipidae</taxon>
        <taxon>Xenopodinae</taxon>
        <taxon>Xenopus</taxon>
        <taxon>Silurana</taxon>
    </lineage>
</organism>
<dbReference type="EMBL" id="BC123946">
    <property type="protein sequence ID" value="AAI23947.1"/>
    <property type="molecule type" value="mRNA"/>
</dbReference>
<dbReference type="RefSeq" id="NP_001072659.1">
    <property type="nucleotide sequence ID" value="NM_001079191.1"/>
</dbReference>
<dbReference type="RefSeq" id="XP_012824104.1">
    <property type="nucleotide sequence ID" value="XM_012968650.2"/>
</dbReference>
<dbReference type="SMR" id="Q05AS9"/>
<dbReference type="FunCoup" id="Q05AS9">
    <property type="interactions" value="2477"/>
</dbReference>
<dbReference type="STRING" id="8364.ENSXETP00000053633"/>
<dbReference type="PaxDb" id="8364-ENSXETP00000001741"/>
<dbReference type="DNASU" id="780116"/>
<dbReference type="GeneID" id="780116"/>
<dbReference type="KEGG" id="xtr:780116"/>
<dbReference type="AGR" id="Xenbase:XB-GENE-999781"/>
<dbReference type="CTD" id="10484"/>
<dbReference type="Xenbase" id="XB-GENE-999781">
    <property type="gene designation" value="sec23a"/>
</dbReference>
<dbReference type="eggNOG" id="KOG1986">
    <property type="taxonomic scope" value="Eukaryota"/>
</dbReference>
<dbReference type="HOGENOM" id="CLU_008658_3_0_1"/>
<dbReference type="InParanoid" id="Q05AS9"/>
<dbReference type="OrthoDB" id="10256289at2759"/>
<dbReference type="Reactome" id="R-XTR-204005">
    <property type="pathway name" value="COPII-mediated vesicle transport"/>
</dbReference>
<dbReference type="Reactome" id="R-XTR-5694530">
    <property type="pathway name" value="Cargo concentration in the ER"/>
</dbReference>
<dbReference type="Reactome" id="R-XTR-983170">
    <property type="pathway name" value="Antigen Presentation: Folding, assembly and peptide loading of class I MHC"/>
</dbReference>
<dbReference type="Proteomes" id="UP000008143">
    <property type="component" value="Chromosome 8"/>
</dbReference>
<dbReference type="Bgee" id="ENSXETG00000032554">
    <property type="expression patterns" value="Expressed in skeletal muscle tissue and 12 other cell types or tissues"/>
</dbReference>
<dbReference type="GO" id="GO:0030127">
    <property type="term" value="C:COPII vesicle coat"/>
    <property type="evidence" value="ECO:0000250"/>
    <property type="project" value="UniProtKB"/>
</dbReference>
<dbReference type="GO" id="GO:0005829">
    <property type="term" value="C:cytosol"/>
    <property type="evidence" value="ECO:0000250"/>
    <property type="project" value="UniProtKB"/>
</dbReference>
<dbReference type="GO" id="GO:0070971">
    <property type="term" value="C:endoplasmic reticulum exit site"/>
    <property type="evidence" value="ECO:0000250"/>
    <property type="project" value="UniProtKB"/>
</dbReference>
<dbReference type="GO" id="GO:0005789">
    <property type="term" value="C:endoplasmic reticulum membrane"/>
    <property type="evidence" value="ECO:0007669"/>
    <property type="project" value="UniProtKB-SubCell"/>
</dbReference>
<dbReference type="GO" id="GO:0008270">
    <property type="term" value="F:zinc ion binding"/>
    <property type="evidence" value="ECO:0000250"/>
    <property type="project" value="UniProtKB"/>
</dbReference>
<dbReference type="GO" id="GO:0090110">
    <property type="term" value="P:COPII-coated vesicle cargo loading"/>
    <property type="evidence" value="ECO:0000250"/>
    <property type="project" value="UniProtKB"/>
</dbReference>
<dbReference type="GO" id="GO:0006886">
    <property type="term" value="P:intracellular protein transport"/>
    <property type="evidence" value="ECO:0007669"/>
    <property type="project" value="InterPro"/>
</dbReference>
<dbReference type="CDD" id="cd01478">
    <property type="entry name" value="Sec23-like"/>
    <property type="match status" value="1"/>
</dbReference>
<dbReference type="CDD" id="cd11287">
    <property type="entry name" value="Sec23_C"/>
    <property type="match status" value="1"/>
</dbReference>
<dbReference type="FunFam" id="1.20.120.730:FF:000003">
    <property type="entry name" value="Protein transport protein SEC23"/>
    <property type="match status" value="1"/>
</dbReference>
<dbReference type="FunFam" id="2.30.30.380:FF:000001">
    <property type="entry name" value="Protein transport protein SEC23"/>
    <property type="match status" value="1"/>
</dbReference>
<dbReference type="FunFam" id="2.60.40.1670:FF:000006">
    <property type="entry name" value="Protein transport protein SEC23"/>
    <property type="match status" value="1"/>
</dbReference>
<dbReference type="FunFam" id="3.40.20.10:FF:000003">
    <property type="entry name" value="Protein transport protein SEC23"/>
    <property type="match status" value="1"/>
</dbReference>
<dbReference type="FunFam" id="3.40.50.410:FF:000011">
    <property type="entry name" value="Protein transport protein SEC23"/>
    <property type="match status" value="1"/>
</dbReference>
<dbReference type="Gene3D" id="2.60.40.1670">
    <property type="entry name" value="beta-sandwich domain of Sec23/24"/>
    <property type="match status" value="1"/>
</dbReference>
<dbReference type="Gene3D" id="1.20.120.730">
    <property type="entry name" value="Sec23/Sec24 helical domain"/>
    <property type="match status" value="1"/>
</dbReference>
<dbReference type="Gene3D" id="3.40.20.10">
    <property type="entry name" value="Severin"/>
    <property type="match status" value="1"/>
</dbReference>
<dbReference type="Gene3D" id="3.40.50.410">
    <property type="entry name" value="von Willebrand factor, type A domain"/>
    <property type="match status" value="1"/>
</dbReference>
<dbReference type="Gene3D" id="2.30.30.380">
    <property type="entry name" value="Zn-finger domain of Sec23/24"/>
    <property type="match status" value="1"/>
</dbReference>
<dbReference type="InterPro" id="IPR029006">
    <property type="entry name" value="ADF-H/Gelsolin-like_dom_sf"/>
</dbReference>
<dbReference type="InterPro" id="IPR007123">
    <property type="entry name" value="Gelsolin-like_dom"/>
</dbReference>
<dbReference type="InterPro" id="IPR036180">
    <property type="entry name" value="Gelsolin-like_dom_sf"/>
</dbReference>
<dbReference type="InterPro" id="IPR037364">
    <property type="entry name" value="Sec23"/>
</dbReference>
<dbReference type="InterPro" id="IPR006900">
    <property type="entry name" value="Sec23/24_helical_dom"/>
</dbReference>
<dbReference type="InterPro" id="IPR036175">
    <property type="entry name" value="Sec23/24_helical_dom_sf"/>
</dbReference>
<dbReference type="InterPro" id="IPR006896">
    <property type="entry name" value="Sec23/24_trunk_dom"/>
</dbReference>
<dbReference type="InterPro" id="IPR012990">
    <property type="entry name" value="Sec23_24_beta_S"/>
</dbReference>
<dbReference type="InterPro" id="IPR037550">
    <property type="entry name" value="Sec23_C"/>
</dbReference>
<dbReference type="InterPro" id="IPR036465">
    <property type="entry name" value="vWFA_dom_sf"/>
</dbReference>
<dbReference type="InterPro" id="IPR006895">
    <property type="entry name" value="Znf_Sec23_Sec24"/>
</dbReference>
<dbReference type="InterPro" id="IPR036174">
    <property type="entry name" value="Znf_Sec23_Sec24_sf"/>
</dbReference>
<dbReference type="PANTHER" id="PTHR11141">
    <property type="entry name" value="PROTEIN TRANSPORT PROTEIN SEC23"/>
    <property type="match status" value="1"/>
</dbReference>
<dbReference type="PANTHER" id="PTHR11141:SF7">
    <property type="entry name" value="PROTEIN TRANSPORT PROTEIN SEC23A"/>
    <property type="match status" value="1"/>
</dbReference>
<dbReference type="Pfam" id="PF00626">
    <property type="entry name" value="Gelsolin"/>
    <property type="match status" value="1"/>
</dbReference>
<dbReference type="Pfam" id="PF08033">
    <property type="entry name" value="Sec23_BS"/>
    <property type="match status" value="1"/>
</dbReference>
<dbReference type="Pfam" id="PF04815">
    <property type="entry name" value="Sec23_helical"/>
    <property type="match status" value="1"/>
</dbReference>
<dbReference type="Pfam" id="PF04811">
    <property type="entry name" value="Sec23_trunk"/>
    <property type="match status" value="1"/>
</dbReference>
<dbReference type="Pfam" id="PF04810">
    <property type="entry name" value="zf-Sec23_Sec24"/>
    <property type="match status" value="1"/>
</dbReference>
<dbReference type="SUPFAM" id="SSF81995">
    <property type="entry name" value="beta-sandwich domain of Sec23/24"/>
    <property type="match status" value="1"/>
</dbReference>
<dbReference type="SUPFAM" id="SSF82754">
    <property type="entry name" value="C-terminal, gelsolin-like domain of Sec23/24"/>
    <property type="match status" value="1"/>
</dbReference>
<dbReference type="SUPFAM" id="SSF81811">
    <property type="entry name" value="Helical domain of Sec23/24"/>
    <property type="match status" value="1"/>
</dbReference>
<dbReference type="SUPFAM" id="SSF53300">
    <property type="entry name" value="vWA-like"/>
    <property type="match status" value="1"/>
</dbReference>
<dbReference type="SUPFAM" id="SSF82919">
    <property type="entry name" value="Zn-finger domain of Sec23/24"/>
    <property type="match status" value="1"/>
</dbReference>
<comment type="function">
    <text evidence="1">Component of the coat protein complex II (COPII) which promotes the formation of transport vesicles from the endoplasmic reticulum (ER). The coat has two main functions, the physical deformation of the endoplasmic reticulum membrane into vesicles and the selection of cargo molecules for their transport to the Golgi complex.</text>
</comment>
<comment type="subunit">
    <text evidence="1">COPII is composed of at least five proteins: the Sec23/24 complex, the Sec13/31 complex and Sar1.</text>
</comment>
<comment type="subcellular location">
    <subcellularLocation>
        <location evidence="1">Cytoplasmic vesicle</location>
        <location evidence="1">COPII-coated vesicle membrane</location>
        <topology evidence="1">Peripheral membrane protein</topology>
        <orientation evidence="1">Cytoplasmic side</orientation>
    </subcellularLocation>
    <subcellularLocation>
        <location evidence="1">Endoplasmic reticulum membrane</location>
        <topology evidence="1">Peripheral membrane protein</topology>
        <orientation evidence="1">Cytoplasmic side</orientation>
    </subcellularLocation>
    <subcellularLocation>
        <location evidence="1">Cytoplasm</location>
        <location evidence="1">Cytosol</location>
    </subcellularLocation>
    <text evidence="1">Enriched at endoplasmic reticulum exit sites (ERES), also known as transitional endoplasmic reticulum (tER).</text>
</comment>
<comment type="domain">
    <text evidence="1">The Gelsolin-like repeat mediates interaction with proteins containing PPP motifs.</text>
</comment>
<comment type="similarity">
    <text evidence="3">Belongs to the SEC23/SEC24 family. SEC23 subfamily.</text>
</comment>